<reference key="1">
    <citation type="journal article" date="1992" name="J. Mol. Evol.">
        <title>Nucleotide sequence of the genome of the filamentous bacteriophage I2-2: module evolution of the filamentous phage genome.</title>
        <authorList>
            <person name="Stassen A.P."/>
            <person name="Schonmakers E.F."/>
            <person name="Yu M."/>
            <person name="Schoenmakers J.G."/>
            <person name="Konings R.N.H."/>
        </authorList>
    </citation>
    <scope>NUCLEOTIDE SEQUENCE [GENOMIC DNA]</scope>
</reference>
<protein>
    <recommendedName>
        <fullName>Tail virion protein G9P</fullName>
    </recommendedName>
    <alternativeName>
        <fullName>Coat protein C, polypeptide II</fullName>
    </alternativeName>
    <alternativeName>
        <fullName>G9P</fullName>
    </alternativeName>
</protein>
<evidence type="ECO:0000250" key="1"/>
<evidence type="ECO:0000255" key="2"/>
<evidence type="ECO:0000305" key="3"/>
<name>G9P_BPI22</name>
<proteinExistence type="inferred from homology"/>
<gene>
    <name type="primary">IX</name>
</gene>
<accession>P15414</accession>
<feature type="chain" id="PRO_0000098184" description="Tail virion protein G9P">
    <location>
        <begin position="1"/>
        <end position="33"/>
    </location>
</feature>
<feature type="transmembrane region" description="Helical" evidence="2">
    <location>
        <begin position="5"/>
        <end position="25"/>
    </location>
</feature>
<organismHost>
    <name type="scientific">Escherichia coli</name>
    <dbReference type="NCBI Taxonomy" id="562"/>
</organismHost>
<organism>
    <name type="scientific">Enterobacteria phage I2-2</name>
    <name type="common">Bacteriophage I2-2</name>
    <dbReference type="NCBI Taxonomy" id="10869"/>
    <lineage>
        <taxon>Viruses</taxon>
        <taxon>Monodnaviria</taxon>
        <taxon>Loebvirae</taxon>
        <taxon>Hofneiviricota</taxon>
        <taxon>Faserviricetes</taxon>
        <taxon>Tubulavirales</taxon>
        <taxon>Inoviridae</taxon>
        <taxon>Lineavirus</taxon>
    </lineage>
</organism>
<sequence length="33" mass="3723">MIDYVGLFIGAYIMGFALFYGIGFFKSIAERIV</sequence>
<dbReference type="EMBL" id="X14336">
    <property type="protein sequence ID" value="CAA32516.1"/>
    <property type="molecule type" value="Genomic_DNA"/>
</dbReference>
<dbReference type="PIR" id="S08089">
    <property type="entry name" value="S08089"/>
</dbReference>
<dbReference type="RefSeq" id="NP_039619.1">
    <property type="nucleotide sequence ID" value="NC_001332.1"/>
</dbReference>
<dbReference type="SMR" id="P15414"/>
<dbReference type="GeneID" id="1260721"/>
<dbReference type="KEGG" id="vg:1260721"/>
<dbReference type="Proteomes" id="UP000000373">
    <property type="component" value="Genome"/>
</dbReference>
<dbReference type="GO" id="GO:0033644">
    <property type="term" value="C:host cell membrane"/>
    <property type="evidence" value="ECO:0007669"/>
    <property type="project" value="UniProtKB-SubCell"/>
</dbReference>
<dbReference type="GO" id="GO:0016020">
    <property type="term" value="C:membrane"/>
    <property type="evidence" value="ECO:0007669"/>
    <property type="project" value="UniProtKB-KW"/>
</dbReference>
<dbReference type="GO" id="GO:0044423">
    <property type="term" value="C:virion component"/>
    <property type="evidence" value="ECO:0007669"/>
    <property type="project" value="UniProtKB-KW"/>
</dbReference>
<comment type="function">
    <text evidence="1">May initiate with G7P the virion concomitant assembly-budding process, by interacting with the packaging signal of the viral genome. The assembly-budding takes place at the host inner membrane. In turn, G7P and G9P are present at the end of the filamentous virion that emerges first from the bacterial host (By similarity).</text>
</comment>
<comment type="subcellular location">
    <subcellularLocation>
        <location evidence="3">Virion</location>
    </subcellularLocation>
    <subcellularLocation>
        <location evidence="3">Host membrane</location>
        <topology evidence="3">Single-pass membrane protein</topology>
    </subcellularLocation>
    <text evidence="1">Prior to assembly, is found associated with the bacterial host inner membrane. There are about five copies of this protein per mature phage that are located on the tail side of the filamentous virion with G7P (By similarity).</text>
</comment>
<comment type="similarity">
    <text evidence="3">Belongs to the inovirus G9P protein family.</text>
</comment>
<keyword id="KW-1043">Host membrane</keyword>
<keyword id="KW-0472">Membrane</keyword>
<keyword id="KW-1185">Reference proteome</keyword>
<keyword id="KW-0812">Transmembrane</keyword>
<keyword id="KW-1133">Transmembrane helix</keyword>
<keyword id="KW-0946">Virion</keyword>